<protein>
    <recommendedName>
        <fullName evidence="1">Uridine kinase</fullName>
        <ecNumber evidence="1">2.7.1.48</ecNumber>
    </recommendedName>
    <alternativeName>
        <fullName evidence="1">Cytidine monophosphokinase</fullName>
    </alternativeName>
    <alternativeName>
        <fullName evidence="1">Uridine monophosphokinase</fullName>
    </alternativeName>
</protein>
<feature type="chain" id="PRO_1000200517" description="Uridine kinase">
    <location>
        <begin position="1"/>
        <end position="206"/>
    </location>
</feature>
<feature type="binding site" evidence="1">
    <location>
        <begin position="11"/>
        <end position="18"/>
    </location>
    <ligand>
        <name>ATP</name>
        <dbReference type="ChEBI" id="CHEBI:30616"/>
    </ligand>
</feature>
<dbReference type="EC" id="2.7.1.48" evidence="1"/>
<dbReference type="EMBL" id="AP009484">
    <property type="protein sequence ID" value="BAH17957.1"/>
    <property type="molecule type" value="Genomic_DNA"/>
</dbReference>
<dbReference type="RefSeq" id="WP_012657155.1">
    <property type="nucleotide sequence ID" value="NC_011999.1"/>
</dbReference>
<dbReference type="SMR" id="B9E6Y9"/>
<dbReference type="STRING" id="458233.MCCL_1250"/>
<dbReference type="GeneID" id="61128853"/>
<dbReference type="KEGG" id="mcl:MCCL_1250"/>
<dbReference type="eggNOG" id="COG0572">
    <property type="taxonomic scope" value="Bacteria"/>
</dbReference>
<dbReference type="HOGENOM" id="CLU_021278_1_2_9"/>
<dbReference type="OrthoDB" id="9777642at2"/>
<dbReference type="UniPathway" id="UPA00574">
    <property type="reaction ID" value="UER00637"/>
</dbReference>
<dbReference type="UniPathway" id="UPA00579">
    <property type="reaction ID" value="UER00640"/>
</dbReference>
<dbReference type="Proteomes" id="UP000001383">
    <property type="component" value="Chromosome"/>
</dbReference>
<dbReference type="GO" id="GO:0005737">
    <property type="term" value="C:cytoplasm"/>
    <property type="evidence" value="ECO:0007669"/>
    <property type="project" value="UniProtKB-SubCell"/>
</dbReference>
<dbReference type="GO" id="GO:0005524">
    <property type="term" value="F:ATP binding"/>
    <property type="evidence" value="ECO:0007669"/>
    <property type="project" value="UniProtKB-UniRule"/>
</dbReference>
<dbReference type="GO" id="GO:0043771">
    <property type="term" value="F:cytidine kinase activity"/>
    <property type="evidence" value="ECO:0007669"/>
    <property type="project" value="RHEA"/>
</dbReference>
<dbReference type="GO" id="GO:0004849">
    <property type="term" value="F:uridine kinase activity"/>
    <property type="evidence" value="ECO:0007669"/>
    <property type="project" value="UniProtKB-UniRule"/>
</dbReference>
<dbReference type="GO" id="GO:0044211">
    <property type="term" value="P:CTP salvage"/>
    <property type="evidence" value="ECO:0007669"/>
    <property type="project" value="UniProtKB-UniRule"/>
</dbReference>
<dbReference type="GO" id="GO:0044206">
    <property type="term" value="P:UMP salvage"/>
    <property type="evidence" value="ECO:0007669"/>
    <property type="project" value="UniProtKB-UniRule"/>
</dbReference>
<dbReference type="CDD" id="cd02023">
    <property type="entry name" value="UMPK"/>
    <property type="match status" value="1"/>
</dbReference>
<dbReference type="Gene3D" id="3.40.50.300">
    <property type="entry name" value="P-loop containing nucleotide triphosphate hydrolases"/>
    <property type="match status" value="1"/>
</dbReference>
<dbReference type="HAMAP" id="MF_00551">
    <property type="entry name" value="Uridine_kinase"/>
    <property type="match status" value="1"/>
</dbReference>
<dbReference type="InterPro" id="IPR027417">
    <property type="entry name" value="P-loop_NTPase"/>
</dbReference>
<dbReference type="InterPro" id="IPR006083">
    <property type="entry name" value="PRK/URK"/>
</dbReference>
<dbReference type="InterPro" id="IPR026008">
    <property type="entry name" value="Uridine_kinase"/>
</dbReference>
<dbReference type="InterPro" id="IPR000764">
    <property type="entry name" value="Uridine_kinase-like"/>
</dbReference>
<dbReference type="NCBIfam" id="NF004018">
    <property type="entry name" value="PRK05480.1"/>
    <property type="match status" value="1"/>
</dbReference>
<dbReference type="NCBIfam" id="TIGR00235">
    <property type="entry name" value="udk"/>
    <property type="match status" value="1"/>
</dbReference>
<dbReference type="PANTHER" id="PTHR10285">
    <property type="entry name" value="URIDINE KINASE"/>
    <property type="match status" value="1"/>
</dbReference>
<dbReference type="Pfam" id="PF00485">
    <property type="entry name" value="PRK"/>
    <property type="match status" value="1"/>
</dbReference>
<dbReference type="PRINTS" id="PR00988">
    <property type="entry name" value="URIDINKINASE"/>
</dbReference>
<dbReference type="SUPFAM" id="SSF52540">
    <property type="entry name" value="P-loop containing nucleoside triphosphate hydrolases"/>
    <property type="match status" value="1"/>
</dbReference>
<sequence length="206" mass="23540">MSKTTIIGIAGGSGSGKTSVTSKILKNLEGYSVALIEQDYYYKNQDHLTFEERLKTNYDHPFAFDNELLIQNLKDLRNGKTVEVPTYDYSNHTRSEKTITFEPKDVIIVEGIFALENSNLRDLMDVKIYVDTDADLRILRRIVRDIEERGRTMESVIDQYLTVVRPMHNQFIEPTKKYADIIIPEGGSNSVAIDIMTTKIQSLIQV</sequence>
<gene>
    <name evidence="1" type="primary">udk</name>
    <name type="ordered locus">MCCL_1250</name>
</gene>
<reference key="1">
    <citation type="journal article" date="2009" name="J. Bacteriol.">
        <title>Complete genome sequence of Macrococcus caseolyticus strain JCSCS5402, reflecting the ancestral genome of the human-pathogenic staphylococci.</title>
        <authorList>
            <person name="Baba T."/>
            <person name="Kuwahara-Arai K."/>
            <person name="Uchiyama I."/>
            <person name="Takeuchi F."/>
            <person name="Ito T."/>
            <person name="Hiramatsu K."/>
        </authorList>
    </citation>
    <scope>NUCLEOTIDE SEQUENCE [LARGE SCALE GENOMIC DNA]</scope>
    <source>
        <strain>JCSC5402</strain>
    </source>
</reference>
<comment type="catalytic activity">
    <reaction evidence="1">
        <text>uridine + ATP = UMP + ADP + H(+)</text>
        <dbReference type="Rhea" id="RHEA:16825"/>
        <dbReference type="ChEBI" id="CHEBI:15378"/>
        <dbReference type="ChEBI" id="CHEBI:16704"/>
        <dbReference type="ChEBI" id="CHEBI:30616"/>
        <dbReference type="ChEBI" id="CHEBI:57865"/>
        <dbReference type="ChEBI" id="CHEBI:456216"/>
        <dbReference type="EC" id="2.7.1.48"/>
    </reaction>
</comment>
<comment type="catalytic activity">
    <reaction evidence="1">
        <text>cytidine + ATP = CMP + ADP + H(+)</text>
        <dbReference type="Rhea" id="RHEA:24674"/>
        <dbReference type="ChEBI" id="CHEBI:15378"/>
        <dbReference type="ChEBI" id="CHEBI:17562"/>
        <dbReference type="ChEBI" id="CHEBI:30616"/>
        <dbReference type="ChEBI" id="CHEBI:60377"/>
        <dbReference type="ChEBI" id="CHEBI:456216"/>
        <dbReference type="EC" id="2.7.1.48"/>
    </reaction>
</comment>
<comment type="pathway">
    <text evidence="1">Pyrimidine metabolism; CTP biosynthesis via salvage pathway; CTP from cytidine: step 1/3.</text>
</comment>
<comment type="pathway">
    <text evidence="1">Pyrimidine metabolism; UMP biosynthesis via salvage pathway; UMP from uridine: step 1/1.</text>
</comment>
<comment type="subcellular location">
    <subcellularLocation>
        <location evidence="1">Cytoplasm</location>
    </subcellularLocation>
</comment>
<comment type="similarity">
    <text evidence="1">Belongs to the uridine kinase family.</text>
</comment>
<keyword id="KW-0067">ATP-binding</keyword>
<keyword id="KW-0963">Cytoplasm</keyword>
<keyword id="KW-0418">Kinase</keyword>
<keyword id="KW-0547">Nucleotide-binding</keyword>
<keyword id="KW-1185">Reference proteome</keyword>
<keyword id="KW-0808">Transferase</keyword>
<evidence type="ECO:0000255" key="1">
    <source>
        <dbReference type="HAMAP-Rule" id="MF_00551"/>
    </source>
</evidence>
<organism>
    <name type="scientific">Macrococcus caseolyticus (strain JCSC5402)</name>
    <name type="common">Macrococcoides caseolyticum</name>
    <dbReference type="NCBI Taxonomy" id="458233"/>
    <lineage>
        <taxon>Bacteria</taxon>
        <taxon>Bacillati</taxon>
        <taxon>Bacillota</taxon>
        <taxon>Bacilli</taxon>
        <taxon>Bacillales</taxon>
        <taxon>Staphylococcaceae</taxon>
        <taxon>Macrococcoides</taxon>
    </lineage>
</organism>
<name>URK_MACCJ</name>
<proteinExistence type="inferred from homology"/>
<accession>B9E6Y9</accession>